<protein>
    <recommendedName>
        <fullName evidence="1">Putative metal-dependent hydrolase BCE_2729</fullName>
        <ecNumber evidence="1">3.-.-.-</ecNumber>
    </recommendedName>
</protein>
<accession>Q737C1</accession>
<sequence>MNDLRYPIGQFTYKRPITEEMIDTWIQEIEDLPNELTKAIKDLDQKQLDTPYRVGGWTVRQVVHHVVDSHMNSYIRFKLALTEKNPTIKPYKEEKWAELPDSKLPVDVSLVMLESLHKRWVNLLYSLELEDLEKTFNHPETGETKLAVAIGLYAWHGRHHTAHITSLRKRLNW</sequence>
<evidence type="ECO:0000255" key="1">
    <source>
        <dbReference type="HAMAP-Rule" id="MF_01256"/>
    </source>
</evidence>
<reference key="1">
    <citation type="journal article" date="2004" name="Nucleic Acids Res.">
        <title>The genome sequence of Bacillus cereus ATCC 10987 reveals metabolic adaptations and a large plasmid related to Bacillus anthracis pXO1.</title>
        <authorList>
            <person name="Rasko D.A."/>
            <person name="Ravel J."/>
            <person name="Oekstad O.A."/>
            <person name="Helgason E."/>
            <person name="Cer R.Z."/>
            <person name="Jiang L."/>
            <person name="Shores K.A."/>
            <person name="Fouts D.E."/>
            <person name="Tourasse N.J."/>
            <person name="Angiuoli S.V."/>
            <person name="Kolonay J.F."/>
            <person name="Nelson W.C."/>
            <person name="Kolstoe A.-B."/>
            <person name="Fraser C.M."/>
            <person name="Read T.D."/>
        </authorList>
    </citation>
    <scope>NUCLEOTIDE SEQUENCE [LARGE SCALE GENOMIC DNA]</scope>
    <source>
        <strain>ATCC 10987 / NRS 248</strain>
    </source>
</reference>
<organism>
    <name type="scientific">Bacillus cereus (strain ATCC 10987 / NRS 248)</name>
    <dbReference type="NCBI Taxonomy" id="222523"/>
    <lineage>
        <taxon>Bacteria</taxon>
        <taxon>Bacillati</taxon>
        <taxon>Bacillota</taxon>
        <taxon>Bacilli</taxon>
        <taxon>Bacillales</taxon>
        <taxon>Bacillaceae</taxon>
        <taxon>Bacillus</taxon>
        <taxon>Bacillus cereus group</taxon>
    </lineage>
</organism>
<feature type="chain" id="PRO_0000162367" description="Putative metal-dependent hydrolase BCE_2729">
    <location>
        <begin position="1"/>
        <end position="173"/>
    </location>
</feature>
<feature type="binding site" evidence="1">
    <location>
        <position position="65"/>
    </location>
    <ligand>
        <name>Zn(2+)</name>
        <dbReference type="ChEBI" id="CHEBI:29105"/>
    </ligand>
</feature>
<feature type="binding site" evidence="1">
    <location>
        <position position="156"/>
    </location>
    <ligand>
        <name>Zn(2+)</name>
        <dbReference type="ChEBI" id="CHEBI:29105"/>
    </ligand>
</feature>
<feature type="binding site" evidence="1">
    <location>
        <position position="160"/>
    </location>
    <ligand>
        <name>Zn(2+)</name>
        <dbReference type="ChEBI" id="CHEBI:29105"/>
    </ligand>
</feature>
<keyword id="KW-0963">Cytoplasm</keyword>
<keyword id="KW-0378">Hydrolase</keyword>
<keyword id="KW-0479">Metal-binding</keyword>
<keyword id="KW-0862">Zinc</keyword>
<comment type="function">
    <text evidence="1">Possible metal-dependent hydrolase.</text>
</comment>
<comment type="cofactor">
    <cofactor evidence="1">
        <name>Zn(2+)</name>
        <dbReference type="ChEBI" id="CHEBI:29105"/>
    </cofactor>
    <text evidence="1">Binds 1 zinc ion per subunit.</text>
</comment>
<comment type="subunit">
    <text evidence="1">Homodimer.</text>
</comment>
<comment type="subcellular location">
    <subcellularLocation>
        <location evidence="1">Cytoplasm</location>
    </subcellularLocation>
</comment>
<comment type="similarity">
    <text evidence="1">Belongs to the metal hydrolase YfiT family.</text>
</comment>
<gene>
    <name type="ordered locus">BCE_2729</name>
</gene>
<dbReference type="EC" id="3.-.-.-" evidence="1"/>
<dbReference type="EMBL" id="AE017194">
    <property type="protein sequence ID" value="AAS41641.1"/>
    <property type="molecule type" value="Genomic_DNA"/>
</dbReference>
<dbReference type="SMR" id="Q737C1"/>
<dbReference type="KEGG" id="bca:BCE_2729"/>
<dbReference type="HOGENOM" id="CLU_105789_1_0_9"/>
<dbReference type="Proteomes" id="UP000002527">
    <property type="component" value="Chromosome"/>
</dbReference>
<dbReference type="GO" id="GO:0005737">
    <property type="term" value="C:cytoplasm"/>
    <property type="evidence" value="ECO:0007669"/>
    <property type="project" value="UniProtKB-SubCell"/>
</dbReference>
<dbReference type="GO" id="GO:0016787">
    <property type="term" value="F:hydrolase activity"/>
    <property type="evidence" value="ECO:0007669"/>
    <property type="project" value="UniProtKB-UniRule"/>
</dbReference>
<dbReference type="GO" id="GO:0008270">
    <property type="term" value="F:zinc ion binding"/>
    <property type="evidence" value="ECO:0007669"/>
    <property type="project" value="UniProtKB-UniRule"/>
</dbReference>
<dbReference type="Gene3D" id="1.20.120.450">
    <property type="entry name" value="dinb family like domain"/>
    <property type="match status" value="1"/>
</dbReference>
<dbReference type="HAMAP" id="MF_01256">
    <property type="entry name" value="YfiT_hydrol"/>
    <property type="match status" value="1"/>
</dbReference>
<dbReference type="InterPro" id="IPR024775">
    <property type="entry name" value="DinB-like"/>
</dbReference>
<dbReference type="InterPro" id="IPR034660">
    <property type="entry name" value="DinB/YfiT-like"/>
</dbReference>
<dbReference type="InterPro" id="IPR023774">
    <property type="entry name" value="Put_metal_dep_hydrolase_YfiT"/>
</dbReference>
<dbReference type="NCBIfam" id="NF009807">
    <property type="entry name" value="PRK13291.1"/>
    <property type="match status" value="1"/>
</dbReference>
<dbReference type="Pfam" id="PF12867">
    <property type="entry name" value="DinB_2"/>
    <property type="match status" value="1"/>
</dbReference>
<dbReference type="SUPFAM" id="SSF109854">
    <property type="entry name" value="DinB/YfiT-like putative metalloenzymes"/>
    <property type="match status" value="1"/>
</dbReference>
<proteinExistence type="inferred from homology"/>
<name>Y2729_BACC1</name>